<name>END8_ECO45</name>
<dbReference type="EC" id="3.2.2.-" evidence="1"/>
<dbReference type="EC" id="4.2.99.18" evidence="1"/>
<dbReference type="EMBL" id="CU928161">
    <property type="protein sequence ID" value="CAR02082.1"/>
    <property type="molecule type" value="Genomic_DNA"/>
</dbReference>
<dbReference type="RefSeq" id="WP_001114008.1">
    <property type="nucleotide sequence ID" value="NC_011742.1"/>
</dbReference>
<dbReference type="SMR" id="B7MFX3"/>
<dbReference type="KEGG" id="ecz:ECS88_0742"/>
<dbReference type="HOGENOM" id="CLU_038423_2_2_6"/>
<dbReference type="Proteomes" id="UP000000747">
    <property type="component" value="Chromosome"/>
</dbReference>
<dbReference type="GO" id="GO:0140078">
    <property type="term" value="F:class I DNA-(apurinic or apyrimidinic site) endonuclease activity"/>
    <property type="evidence" value="ECO:0007669"/>
    <property type="project" value="UniProtKB-EC"/>
</dbReference>
<dbReference type="GO" id="GO:0003684">
    <property type="term" value="F:damaged DNA binding"/>
    <property type="evidence" value="ECO:0007669"/>
    <property type="project" value="InterPro"/>
</dbReference>
<dbReference type="GO" id="GO:0000703">
    <property type="term" value="F:oxidized pyrimidine nucleobase lesion DNA N-glycosylase activity"/>
    <property type="evidence" value="ECO:0007669"/>
    <property type="project" value="UniProtKB-UniRule"/>
</dbReference>
<dbReference type="GO" id="GO:0008270">
    <property type="term" value="F:zinc ion binding"/>
    <property type="evidence" value="ECO:0007669"/>
    <property type="project" value="UniProtKB-UniRule"/>
</dbReference>
<dbReference type="GO" id="GO:0006284">
    <property type="term" value="P:base-excision repair"/>
    <property type="evidence" value="ECO:0007669"/>
    <property type="project" value="InterPro"/>
</dbReference>
<dbReference type="CDD" id="cd08965">
    <property type="entry name" value="EcNei-like_N"/>
    <property type="match status" value="1"/>
</dbReference>
<dbReference type="FunFam" id="1.10.8.50:FF:000005">
    <property type="entry name" value="Endonuclease 8"/>
    <property type="match status" value="1"/>
</dbReference>
<dbReference type="FunFam" id="3.20.190.10:FF:000002">
    <property type="entry name" value="Endonuclease 8"/>
    <property type="match status" value="1"/>
</dbReference>
<dbReference type="Gene3D" id="1.10.8.50">
    <property type="match status" value="1"/>
</dbReference>
<dbReference type="Gene3D" id="3.20.190.10">
    <property type="entry name" value="MutM-like, N-terminal"/>
    <property type="match status" value="1"/>
</dbReference>
<dbReference type="HAMAP" id="MF_01253">
    <property type="entry name" value="Endonuclease_8"/>
    <property type="match status" value="1"/>
</dbReference>
<dbReference type="InterPro" id="IPR015886">
    <property type="entry name" value="DNA_glyclase/AP_lyase_DNA-bd"/>
</dbReference>
<dbReference type="InterPro" id="IPR015887">
    <property type="entry name" value="DNA_glyclase_Znf_dom_DNA_BS"/>
</dbReference>
<dbReference type="InterPro" id="IPR044091">
    <property type="entry name" value="EcNei-like_N"/>
</dbReference>
<dbReference type="InterPro" id="IPR023713">
    <property type="entry name" value="Endonuclease-VIII"/>
</dbReference>
<dbReference type="InterPro" id="IPR012319">
    <property type="entry name" value="FPG_cat"/>
</dbReference>
<dbReference type="InterPro" id="IPR035937">
    <property type="entry name" value="MutM-like_N-ter"/>
</dbReference>
<dbReference type="InterPro" id="IPR010979">
    <property type="entry name" value="Ribosomal_uS13-like_H2TH"/>
</dbReference>
<dbReference type="InterPro" id="IPR000214">
    <property type="entry name" value="Znf_DNA_glyclase/AP_lyase"/>
</dbReference>
<dbReference type="InterPro" id="IPR010663">
    <property type="entry name" value="Znf_FPG/IleRS"/>
</dbReference>
<dbReference type="NCBIfam" id="NF007763">
    <property type="entry name" value="PRK10445.1"/>
    <property type="match status" value="1"/>
</dbReference>
<dbReference type="PANTHER" id="PTHR42697">
    <property type="entry name" value="ENDONUCLEASE 8"/>
    <property type="match status" value="1"/>
</dbReference>
<dbReference type="PANTHER" id="PTHR42697:SF1">
    <property type="entry name" value="ENDONUCLEASE 8"/>
    <property type="match status" value="1"/>
</dbReference>
<dbReference type="Pfam" id="PF01149">
    <property type="entry name" value="Fapy_DNA_glyco"/>
    <property type="match status" value="1"/>
</dbReference>
<dbReference type="Pfam" id="PF06831">
    <property type="entry name" value="H2TH"/>
    <property type="match status" value="1"/>
</dbReference>
<dbReference type="Pfam" id="PF06827">
    <property type="entry name" value="zf-FPG_IleRS"/>
    <property type="match status" value="1"/>
</dbReference>
<dbReference type="SMART" id="SM00898">
    <property type="entry name" value="Fapy_DNA_glyco"/>
    <property type="match status" value="1"/>
</dbReference>
<dbReference type="SMART" id="SM01232">
    <property type="entry name" value="H2TH"/>
    <property type="match status" value="1"/>
</dbReference>
<dbReference type="SUPFAM" id="SSF57716">
    <property type="entry name" value="Glucocorticoid receptor-like (DNA-binding domain)"/>
    <property type="match status" value="1"/>
</dbReference>
<dbReference type="SUPFAM" id="SSF81624">
    <property type="entry name" value="N-terminal domain of MutM-like DNA repair proteins"/>
    <property type="match status" value="1"/>
</dbReference>
<dbReference type="SUPFAM" id="SSF46946">
    <property type="entry name" value="S13-like H2TH domain"/>
    <property type="match status" value="1"/>
</dbReference>
<dbReference type="PROSITE" id="PS51068">
    <property type="entry name" value="FPG_CAT"/>
    <property type="match status" value="1"/>
</dbReference>
<dbReference type="PROSITE" id="PS01242">
    <property type="entry name" value="ZF_FPG_1"/>
    <property type="match status" value="1"/>
</dbReference>
<dbReference type="PROSITE" id="PS51066">
    <property type="entry name" value="ZF_FPG_2"/>
    <property type="match status" value="1"/>
</dbReference>
<proteinExistence type="inferred from homology"/>
<evidence type="ECO:0000255" key="1">
    <source>
        <dbReference type="HAMAP-Rule" id="MF_01253"/>
    </source>
</evidence>
<accession>B7MFX3</accession>
<sequence>MPEGPEIRRAADNLEAAIKGKPLTDVWFAFPQLKSYQSRLIGQHVTHVETRGKALLTHFSNDLTLYSHNQLYGVWRVVDTGEEPQTTRVLRVKLQTADKTILLYSASDIEMLTPEQLTTHPFLQRVGPDVLDPNLTPEVVKERLLSPRFRNRQFAGLLLDQAFLAGLGNYLRVEILWQVGLTGNHKAKDLNAAQLDALAHALLDTPRLSYATRGQVDENKYHGALFRFKVFHRDGEPCERCGGIIEKTTLSSRPFYWCPGCQH</sequence>
<gene>
    <name evidence="1" type="primary">nei</name>
    <name type="ordered locus">ECS88_0742</name>
</gene>
<keyword id="KW-0227">DNA damage</keyword>
<keyword id="KW-0234">DNA repair</keyword>
<keyword id="KW-0238">DNA-binding</keyword>
<keyword id="KW-0326">Glycosidase</keyword>
<keyword id="KW-0378">Hydrolase</keyword>
<keyword id="KW-0456">Lyase</keyword>
<keyword id="KW-0479">Metal-binding</keyword>
<keyword id="KW-0511">Multifunctional enzyme</keyword>
<keyword id="KW-1185">Reference proteome</keyword>
<keyword id="KW-0862">Zinc</keyword>
<keyword id="KW-0863">Zinc-finger</keyword>
<reference key="1">
    <citation type="journal article" date="2009" name="PLoS Genet.">
        <title>Organised genome dynamics in the Escherichia coli species results in highly diverse adaptive paths.</title>
        <authorList>
            <person name="Touchon M."/>
            <person name="Hoede C."/>
            <person name="Tenaillon O."/>
            <person name="Barbe V."/>
            <person name="Baeriswyl S."/>
            <person name="Bidet P."/>
            <person name="Bingen E."/>
            <person name="Bonacorsi S."/>
            <person name="Bouchier C."/>
            <person name="Bouvet O."/>
            <person name="Calteau A."/>
            <person name="Chiapello H."/>
            <person name="Clermont O."/>
            <person name="Cruveiller S."/>
            <person name="Danchin A."/>
            <person name="Diard M."/>
            <person name="Dossat C."/>
            <person name="Karoui M.E."/>
            <person name="Frapy E."/>
            <person name="Garry L."/>
            <person name="Ghigo J.M."/>
            <person name="Gilles A.M."/>
            <person name="Johnson J."/>
            <person name="Le Bouguenec C."/>
            <person name="Lescat M."/>
            <person name="Mangenot S."/>
            <person name="Martinez-Jehanne V."/>
            <person name="Matic I."/>
            <person name="Nassif X."/>
            <person name="Oztas S."/>
            <person name="Petit M.A."/>
            <person name="Pichon C."/>
            <person name="Rouy Z."/>
            <person name="Ruf C.S."/>
            <person name="Schneider D."/>
            <person name="Tourret J."/>
            <person name="Vacherie B."/>
            <person name="Vallenet D."/>
            <person name="Medigue C."/>
            <person name="Rocha E.P.C."/>
            <person name="Denamur E."/>
        </authorList>
    </citation>
    <scope>NUCLEOTIDE SEQUENCE [LARGE SCALE GENOMIC DNA]</scope>
    <source>
        <strain>S88 / ExPEC</strain>
    </source>
</reference>
<organism>
    <name type="scientific">Escherichia coli O45:K1 (strain S88 / ExPEC)</name>
    <dbReference type="NCBI Taxonomy" id="585035"/>
    <lineage>
        <taxon>Bacteria</taxon>
        <taxon>Pseudomonadati</taxon>
        <taxon>Pseudomonadota</taxon>
        <taxon>Gammaproteobacteria</taxon>
        <taxon>Enterobacterales</taxon>
        <taxon>Enterobacteriaceae</taxon>
        <taxon>Escherichia</taxon>
    </lineage>
</organism>
<comment type="function">
    <text evidence="1">Involved in base excision repair of DNA damaged by oxidation or by mutagenic agents. Acts as a DNA glycosylase that recognizes and removes damaged bases. Has a preference for oxidized pyrimidines, such as thymine glycol, 5,6-dihydrouracil and 5,6-dihydrothymine. Has AP (apurinic/apyrimidinic) lyase activity and introduces nicks in the DNA strand. Cleaves the DNA backbone by beta-delta elimination to generate a single-strand break at the site of the removed base with both 3'- and 5'-phosphates.</text>
</comment>
<comment type="catalytic activity">
    <reaction evidence="1">
        <text>2'-deoxyribonucleotide-(2'-deoxyribose 5'-phosphate)-2'-deoxyribonucleotide-DNA = a 3'-end 2'-deoxyribonucleotide-(2,3-dehydro-2,3-deoxyribose 5'-phosphate)-DNA + a 5'-end 5'-phospho-2'-deoxyribonucleoside-DNA + H(+)</text>
        <dbReference type="Rhea" id="RHEA:66592"/>
        <dbReference type="Rhea" id="RHEA-COMP:13180"/>
        <dbReference type="Rhea" id="RHEA-COMP:16897"/>
        <dbReference type="Rhea" id="RHEA-COMP:17067"/>
        <dbReference type="ChEBI" id="CHEBI:15378"/>
        <dbReference type="ChEBI" id="CHEBI:136412"/>
        <dbReference type="ChEBI" id="CHEBI:157695"/>
        <dbReference type="ChEBI" id="CHEBI:167181"/>
        <dbReference type="EC" id="4.2.99.18"/>
    </reaction>
</comment>
<comment type="cofactor">
    <cofactor evidence="1">
        <name>Zn(2+)</name>
        <dbReference type="ChEBI" id="CHEBI:29105"/>
    </cofactor>
    <text evidence="1">Binds 1 zinc ion per subunit.</text>
</comment>
<comment type="similarity">
    <text evidence="1">Belongs to the FPG family.</text>
</comment>
<protein>
    <recommendedName>
        <fullName evidence="1">Endonuclease 8</fullName>
    </recommendedName>
    <alternativeName>
        <fullName evidence="1">DNA glycosylase/AP lyase Nei</fullName>
        <ecNumber evidence="1">3.2.2.-</ecNumber>
        <ecNumber evidence="1">4.2.99.18</ecNumber>
    </alternativeName>
    <alternativeName>
        <fullName evidence="1">DNA-(apurinic or apyrimidinic site) lyase Nei</fullName>
    </alternativeName>
    <alternativeName>
        <fullName evidence="1">Endonuclease VIII</fullName>
    </alternativeName>
</protein>
<feature type="initiator methionine" description="Removed" evidence="1">
    <location>
        <position position="1"/>
    </location>
</feature>
<feature type="chain" id="PRO_1000139931" description="Endonuclease 8">
    <location>
        <begin position="2"/>
        <end position="263"/>
    </location>
</feature>
<feature type="zinc finger region" description="FPG-type" evidence="1">
    <location>
        <begin position="229"/>
        <end position="263"/>
    </location>
</feature>
<feature type="active site" description="Schiff-base intermediate with DNA" evidence="1">
    <location>
        <position position="2"/>
    </location>
</feature>
<feature type="active site" description="Proton donor" evidence="1">
    <location>
        <position position="3"/>
    </location>
</feature>
<feature type="active site" description="Proton donor; for beta-elimination activity" evidence="1">
    <location>
        <position position="53"/>
    </location>
</feature>
<feature type="active site" description="Proton donor; for delta-elimination activity" evidence="1">
    <location>
        <position position="253"/>
    </location>
</feature>
<feature type="binding site" evidence="1">
    <location>
        <position position="70"/>
    </location>
    <ligand>
        <name>DNA</name>
        <dbReference type="ChEBI" id="CHEBI:16991"/>
    </ligand>
</feature>
<feature type="binding site" evidence="1">
    <location>
        <position position="125"/>
    </location>
    <ligand>
        <name>DNA</name>
        <dbReference type="ChEBI" id="CHEBI:16991"/>
    </ligand>
</feature>
<feature type="binding site" evidence="1">
    <location>
        <position position="169"/>
    </location>
    <ligand>
        <name>DNA</name>
        <dbReference type="ChEBI" id="CHEBI:16991"/>
    </ligand>
</feature>